<feature type="chain" id="PRO_1000051199" description="Small ribosomal subunit protein uS9">
    <location>
        <begin position="1"/>
        <end position="133"/>
    </location>
</feature>
<feature type="region of interest" description="Disordered" evidence="2">
    <location>
        <begin position="97"/>
        <end position="133"/>
    </location>
</feature>
<feature type="compositionally biased region" description="Basic and acidic residues" evidence="2">
    <location>
        <begin position="97"/>
        <end position="113"/>
    </location>
</feature>
<feature type="compositionally biased region" description="Basic residues" evidence="2">
    <location>
        <begin position="114"/>
        <end position="133"/>
    </location>
</feature>
<dbReference type="EMBL" id="CR848038">
    <property type="protein sequence ID" value="CAH63970.1"/>
    <property type="molecule type" value="Genomic_DNA"/>
</dbReference>
<dbReference type="RefSeq" id="WP_011097135.1">
    <property type="nucleotide sequence ID" value="NC_004552.2"/>
</dbReference>
<dbReference type="SMR" id="Q5L5W2"/>
<dbReference type="GeneID" id="93024058"/>
<dbReference type="KEGG" id="cab:CAB519"/>
<dbReference type="eggNOG" id="COG0103">
    <property type="taxonomic scope" value="Bacteria"/>
</dbReference>
<dbReference type="HOGENOM" id="CLU_046483_2_1_0"/>
<dbReference type="OrthoDB" id="9803965at2"/>
<dbReference type="Proteomes" id="UP000001012">
    <property type="component" value="Chromosome"/>
</dbReference>
<dbReference type="GO" id="GO:0022627">
    <property type="term" value="C:cytosolic small ribosomal subunit"/>
    <property type="evidence" value="ECO:0007669"/>
    <property type="project" value="TreeGrafter"/>
</dbReference>
<dbReference type="GO" id="GO:0003723">
    <property type="term" value="F:RNA binding"/>
    <property type="evidence" value="ECO:0007669"/>
    <property type="project" value="TreeGrafter"/>
</dbReference>
<dbReference type="GO" id="GO:0003735">
    <property type="term" value="F:structural constituent of ribosome"/>
    <property type="evidence" value="ECO:0007669"/>
    <property type="project" value="InterPro"/>
</dbReference>
<dbReference type="GO" id="GO:0006412">
    <property type="term" value="P:translation"/>
    <property type="evidence" value="ECO:0007669"/>
    <property type="project" value="UniProtKB-UniRule"/>
</dbReference>
<dbReference type="FunFam" id="3.30.230.10:FF:000001">
    <property type="entry name" value="30S ribosomal protein S9"/>
    <property type="match status" value="1"/>
</dbReference>
<dbReference type="Gene3D" id="3.30.230.10">
    <property type="match status" value="1"/>
</dbReference>
<dbReference type="HAMAP" id="MF_00532_B">
    <property type="entry name" value="Ribosomal_uS9_B"/>
    <property type="match status" value="1"/>
</dbReference>
<dbReference type="InterPro" id="IPR020568">
    <property type="entry name" value="Ribosomal_Su5_D2-typ_SF"/>
</dbReference>
<dbReference type="InterPro" id="IPR000754">
    <property type="entry name" value="Ribosomal_uS9"/>
</dbReference>
<dbReference type="InterPro" id="IPR023035">
    <property type="entry name" value="Ribosomal_uS9_bac/plastid"/>
</dbReference>
<dbReference type="InterPro" id="IPR020574">
    <property type="entry name" value="Ribosomal_uS9_CS"/>
</dbReference>
<dbReference type="InterPro" id="IPR014721">
    <property type="entry name" value="Ribsml_uS5_D2-typ_fold_subgr"/>
</dbReference>
<dbReference type="NCBIfam" id="NF001099">
    <property type="entry name" value="PRK00132.1"/>
    <property type="match status" value="1"/>
</dbReference>
<dbReference type="PANTHER" id="PTHR21569">
    <property type="entry name" value="RIBOSOMAL PROTEIN S9"/>
    <property type="match status" value="1"/>
</dbReference>
<dbReference type="PANTHER" id="PTHR21569:SF1">
    <property type="entry name" value="SMALL RIBOSOMAL SUBUNIT PROTEIN US9M"/>
    <property type="match status" value="1"/>
</dbReference>
<dbReference type="Pfam" id="PF00380">
    <property type="entry name" value="Ribosomal_S9"/>
    <property type="match status" value="1"/>
</dbReference>
<dbReference type="SUPFAM" id="SSF54211">
    <property type="entry name" value="Ribosomal protein S5 domain 2-like"/>
    <property type="match status" value="1"/>
</dbReference>
<dbReference type="PROSITE" id="PS00360">
    <property type="entry name" value="RIBOSOMAL_S9"/>
    <property type="match status" value="1"/>
</dbReference>
<organism>
    <name type="scientific">Chlamydia abortus (strain DSM 27085 / S26/3)</name>
    <name type="common">Chlamydophila abortus</name>
    <dbReference type="NCBI Taxonomy" id="218497"/>
    <lineage>
        <taxon>Bacteria</taxon>
        <taxon>Pseudomonadati</taxon>
        <taxon>Chlamydiota</taxon>
        <taxon>Chlamydiia</taxon>
        <taxon>Chlamydiales</taxon>
        <taxon>Chlamydiaceae</taxon>
        <taxon>Chlamydia/Chlamydophila group</taxon>
        <taxon>Chlamydia</taxon>
    </lineage>
</organism>
<evidence type="ECO:0000255" key="1">
    <source>
        <dbReference type="HAMAP-Rule" id="MF_00532"/>
    </source>
</evidence>
<evidence type="ECO:0000256" key="2">
    <source>
        <dbReference type="SAM" id="MobiDB-lite"/>
    </source>
</evidence>
<evidence type="ECO:0000305" key="3"/>
<accession>Q5L5W2</accession>
<proteinExistence type="inferred from homology"/>
<gene>
    <name evidence="1" type="primary">rpsI</name>
    <name type="ordered locus">CAB519</name>
</gene>
<comment type="similarity">
    <text evidence="1">Belongs to the universal ribosomal protein uS9 family.</text>
</comment>
<reference key="1">
    <citation type="journal article" date="2005" name="Genome Res.">
        <title>The Chlamydophila abortus genome sequence reveals an array of variable proteins that contribute to interspecies variation.</title>
        <authorList>
            <person name="Thomson N.R."/>
            <person name="Yeats C."/>
            <person name="Bell K."/>
            <person name="Holden M.T.G."/>
            <person name="Bentley S.D."/>
            <person name="Livingstone M."/>
            <person name="Cerdeno-Tarraga A.-M."/>
            <person name="Harris B."/>
            <person name="Doggett J."/>
            <person name="Ormond D."/>
            <person name="Mungall K."/>
            <person name="Clarke K."/>
            <person name="Feltwell T."/>
            <person name="Hance Z."/>
            <person name="Sanders M."/>
            <person name="Quail M.A."/>
            <person name="Price C."/>
            <person name="Barrell B.G."/>
            <person name="Parkhill J."/>
            <person name="Longbottom D."/>
        </authorList>
    </citation>
    <scope>NUCLEOTIDE SEQUENCE [LARGE SCALE GENOMIC DNA]</scope>
    <source>
        <strain>DSM 27085 / S26/3</strain>
    </source>
</reference>
<name>RS9_CHLAB</name>
<keyword id="KW-0687">Ribonucleoprotein</keyword>
<keyword id="KW-0689">Ribosomal protein</keyword>
<protein>
    <recommendedName>
        <fullName evidence="1">Small ribosomal subunit protein uS9</fullName>
    </recommendedName>
    <alternativeName>
        <fullName evidence="3">30S ribosomal protein S9</fullName>
    </alternativeName>
</protein>
<sequence length="133" mass="15025">MVKNTIEESVATGRRKQAVSSVRLRPGTGKIDVNGKAFDEYFPLEIQRVTILSPLKVLGYSNDFDLVIRINGGGIQGQVIATRLGLARALLKKNVDSKQELKSHGFLTRDPRKKERKKYGHKKARKSFQFSKR</sequence>